<gene>
    <name evidence="1" type="primary">def1</name>
    <name type="ordered locus">CE1720</name>
</gene>
<reference key="1">
    <citation type="journal article" date="2003" name="Genome Res.">
        <title>Comparative complete genome sequence analysis of the amino acid replacements responsible for the thermostability of Corynebacterium efficiens.</title>
        <authorList>
            <person name="Nishio Y."/>
            <person name="Nakamura Y."/>
            <person name="Kawarabayasi Y."/>
            <person name="Usuda Y."/>
            <person name="Kimura E."/>
            <person name="Sugimoto S."/>
            <person name="Matsui K."/>
            <person name="Yamagishi A."/>
            <person name="Kikuchi H."/>
            <person name="Ikeo K."/>
            <person name="Gojobori T."/>
        </authorList>
    </citation>
    <scope>NUCLEOTIDE SEQUENCE [LARGE SCALE GENOMIC DNA]</scope>
    <source>
        <strain>DSM 44549 / YS-314 / AJ 12310 / JCM 11189 / NBRC 100395</strain>
    </source>
</reference>
<organism>
    <name type="scientific">Corynebacterium efficiens (strain DSM 44549 / YS-314 / AJ 12310 / JCM 11189 / NBRC 100395)</name>
    <dbReference type="NCBI Taxonomy" id="196164"/>
    <lineage>
        <taxon>Bacteria</taxon>
        <taxon>Bacillati</taxon>
        <taxon>Actinomycetota</taxon>
        <taxon>Actinomycetes</taxon>
        <taxon>Mycobacteriales</taxon>
        <taxon>Corynebacteriaceae</taxon>
        <taxon>Corynebacterium</taxon>
    </lineage>
</organism>
<proteinExistence type="inferred from homology"/>
<comment type="function">
    <text evidence="1">Removes the formyl group from the N-terminal Met of newly synthesized proteins. Requires at least a dipeptide for an efficient rate of reaction. N-terminal L-methionine is a prerequisite for activity but the enzyme has broad specificity at other positions.</text>
</comment>
<comment type="catalytic activity">
    <reaction evidence="1">
        <text>N-terminal N-formyl-L-methionyl-[peptide] + H2O = N-terminal L-methionyl-[peptide] + formate</text>
        <dbReference type="Rhea" id="RHEA:24420"/>
        <dbReference type="Rhea" id="RHEA-COMP:10639"/>
        <dbReference type="Rhea" id="RHEA-COMP:10640"/>
        <dbReference type="ChEBI" id="CHEBI:15377"/>
        <dbReference type="ChEBI" id="CHEBI:15740"/>
        <dbReference type="ChEBI" id="CHEBI:49298"/>
        <dbReference type="ChEBI" id="CHEBI:64731"/>
        <dbReference type="EC" id="3.5.1.88"/>
    </reaction>
</comment>
<comment type="cofactor">
    <cofactor evidence="1">
        <name>Fe(2+)</name>
        <dbReference type="ChEBI" id="CHEBI:29033"/>
    </cofactor>
    <text evidence="1">Binds 1 Fe(2+) ion.</text>
</comment>
<comment type="similarity">
    <text evidence="1">Belongs to the polypeptide deformylase family.</text>
</comment>
<accession>Q8FT51</accession>
<evidence type="ECO:0000255" key="1">
    <source>
        <dbReference type="HAMAP-Rule" id="MF_00163"/>
    </source>
</evidence>
<protein>
    <recommendedName>
        <fullName evidence="1">Peptide deformylase 1</fullName>
        <shortName evidence="1">PDF 1</shortName>
        <ecNumber evidence="1">3.5.1.88</ecNumber>
    </recommendedName>
    <alternativeName>
        <fullName evidence="1">Polypeptide deformylase 1</fullName>
    </alternativeName>
</protein>
<name>DEF1_COREF</name>
<feature type="chain" id="PRO_0000082772" description="Peptide deformylase 1">
    <location>
        <begin position="1"/>
        <end position="169"/>
    </location>
</feature>
<feature type="active site" evidence="1">
    <location>
        <position position="136"/>
    </location>
</feature>
<feature type="binding site" evidence="1">
    <location>
        <position position="93"/>
    </location>
    <ligand>
        <name>Fe cation</name>
        <dbReference type="ChEBI" id="CHEBI:24875"/>
    </ligand>
</feature>
<feature type="binding site" evidence="1">
    <location>
        <position position="135"/>
    </location>
    <ligand>
        <name>Fe cation</name>
        <dbReference type="ChEBI" id="CHEBI:24875"/>
    </ligand>
</feature>
<feature type="binding site" evidence="1">
    <location>
        <position position="139"/>
    </location>
    <ligand>
        <name>Fe cation</name>
        <dbReference type="ChEBI" id="CHEBI:24875"/>
    </ligand>
</feature>
<keyword id="KW-0378">Hydrolase</keyword>
<keyword id="KW-0408">Iron</keyword>
<keyword id="KW-0479">Metal-binding</keyword>
<keyword id="KW-0648">Protein biosynthesis</keyword>
<keyword id="KW-1185">Reference proteome</keyword>
<dbReference type="EC" id="3.5.1.88" evidence="1"/>
<dbReference type="EMBL" id="BA000035">
    <property type="protein sequence ID" value="BAC18530.1"/>
    <property type="molecule type" value="Genomic_DNA"/>
</dbReference>
<dbReference type="RefSeq" id="WP_006767720.1">
    <property type="nucleotide sequence ID" value="NC_004369.1"/>
</dbReference>
<dbReference type="SMR" id="Q8FT51"/>
<dbReference type="STRING" id="196164.gene:10742141"/>
<dbReference type="KEGG" id="cef:CE1720"/>
<dbReference type="eggNOG" id="COG0242">
    <property type="taxonomic scope" value="Bacteria"/>
</dbReference>
<dbReference type="HOGENOM" id="CLU_061901_1_2_11"/>
<dbReference type="OrthoDB" id="9804313at2"/>
<dbReference type="Proteomes" id="UP000001409">
    <property type="component" value="Chromosome"/>
</dbReference>
<dbReference type="GO" id="GO:0046872">
    <property type="term" value="F:metal ion binding"/>
    <property type="evidence" value="ECO:0007669"/>
    <property type="project" value="UniProtKB-KW"/>
</dbReference>
<dbReference type="GO" id="GO:0042586">
    <property type="term" value="F:peptide deformylase activity"/>
    <property type="evidence" value="ECO:0007669"/>
    <property type="project" value="UniProtKB-UniRule"/>
</dbReference>
<dbReference type="GO" id="GO:0043686">
    <property type="term" value="P:co-translational protein modification"/>
    <property type="evidence" value="ECO:0007669"/>
    <property type="project" value="TreeGrafter"/>
</dbReference>
<dbReference type="GO" id="GO:0006412">
    <property type="term" value="P:translation"/>
    <property type="evidence" value="ECO:0007669"/>
    <property type="project" value="UniProtKB-UniRule"/>
</dbReference>
<dbReference type="CDD" id="cd00487">
    <property type="entry name" value="Pep_deformylase"/>
    <property type="match status" value="1"/>
</dbReference>
<dbReference type="Gene3D" id="3.90.45.10">
    <property type="entry name" value="Peptide deformylase"/>
    <property type="match status" value="1"/>
</dbReference>
<dbReference type="HAMAP" id="MF_00163">
    <property type="entry name" value="Pep_deformylase"/>
    <property type="match status" value="1"/>
</dbReference>
<dbReference type="InterPro" id="IPR023635">
    <property type="entry name" value="Peptide_deformylase"/>
</dbReference>
<dbReference type="InterPro" id="IPR036821">
    <property type="entry name" value="Peptide_deformylase_sf"/>
</dbReference>
<dbReference type="NCBIfam" id="TIGR00079">
    <property type="entry name" value="pept_deformyl"/>
    <property type="match status" value="1"/>
</dbReference>
<dbReference type="NCBIfam" id="NF001159">
    <property type="entry name" value="PRK00150.1-3"/>
    <property type="match status" value="1"/>
</dbReference>
<dbReference type="PANTHER" id="PTHR10458">
    <property type="entry name" value="PEPTIDE DEFORMYLASE"/>
    <property type="match status" value="1"/>
</dbReference>
<dbReference type="PANTHER" id="PTHR10458:SF2">
    <property type="entry name" value="PEPTIDE DEFORMYLASE, MITOCHONDRIAL"/>
    <property type="match status" value="1"/>
</dbReference>
<dbReference type="Pfam" id="PF01327">
    <property type="entry name" value="Pep_deformylase"/>
    <property type="match status" value="1"/>
</dbReference>
<dbReference type="PIRSF" id="PIRSF004749">
    <property type="entry name" value="Pep_def"/>
    <property type="match status" value="1"/>
</dbReference>
<dbReference type="PRINTS" id="PR01576">
    <property type="entry name" value="PDEFORMYLASE"/>
</dbReference>
<dbReference type="SUPFAM" id="SSF56420">
    <property type="entry name" value="Peptide deformylase"/>
    <property type="match status" value="1"/>
</dbReference>
<sequence length="169" mass="18445">MTVRDVRIFGDPVLTSRADEVVDFDESLATLIDDMFDTMEDAGGVGLAANQVGVLRRVFVFDCSHVDGGLRGHVVNPVWEPIGEETQTGKEGCLSIPDVSAETTRYETVKLSGQDRDGNPIGLVASGLLSRCIQHETDHLDGVLFLKRLDPAERKAAMGVIRASDWFNK</sequence>